<keyword id="KW-0143">Chaperone</keyword>
<keyword id="KW-0963">Cytoplasm</keyword>
<keyword id="KW-1015">Disulfide bond</keyword>
<keyword id="KW-0676">Redox-active center</keyword>
<keyword id="KW-0862">Zinc</keyword>
<organism>
    <name type="scientific">Pseudomonas syringae pv. syringae (strain B728a)</name>
    <dbReference type="NCBI Taxonomy" id="205918"/>
    <lineage>
        <taxon>Bacteria</taxon>
        <taxon>Pseudomonadati</taxon>
        <taxon>Pseudomonadota</taxon>
        <taxon>Gammaproteobacteria</taxon>
        <taxon>Pseudomonadales</taxon>
        <taxon>Pseudomonadaceae</taxon>
        <taxon>Pseudomonas</taxon>
        <taxon>Pseudomonas syringae</taxon>
    </lineage>
</organism>
<feature type="chain" id="PRO_0000238086" description="33 kDa chaperonin">
    <location>
        <begin position="1"/>
        <end position="300"/>
    </location>
</feature>
<feature type="disulfide bond" description="Redox-active" evidence="1">
    <location>
        <begin position="235"/>
        <end position="237"/>
    </location>
</feature>
<feature type="disulfide bond" description="Redox-active" evidence="1">
    <location>
        <begin position="269"/>
        <end position="272"/>
    </location>
</feature>
<evidence type="ECO:0000255" key="1">
    <source>
        <dbReference type="HAMAP-Rule" id="MF_00117"/>
    </source>
</evidence>
<reference key="1">
    <citation type="journal article" date="2005" name="Proc. Natl. Acad. Sci. U.S.A.">
        <title>Comparison of the complete genome sequences of Pseudomonas syringae pv. syringae B728a and pv. tomato DC3000.</title>
        <authorList>
            <person name="Feil H."/>
            <person name="Feil W.S."/>
            <person name="Chain P."/>
            <person name="Larimer F."/>
            <person name="Dibartolo G."/>
            <person name="Copeland A."/>
            <person name="Lykidis A."/>
            <person name="Trong S."/>
            <person name="Nolan M."/>
            <person name="Goltsman E."/>
            <person name="Thiel J."/>
            <person name="Malfatti S."/>
            <person name="Loper J.E."/>
            <person name="Lapidus A."/>
            <person name="Detter J.C."/>
            <person name="Land M."/>
            <person name="Richardson P.M."/>
            <person name="Kyrpides N.C."/>
            <person name="Ivanova N."/>
            <person name="Lindow S.E."/>
        </authorList>
    </citation>
    <scope>NUCLEOTIDE SEQUENCE [LARGE SCALE GENOMIC DNA]</scope>
    <source>
        <strain>B728a</strain>
    </source>
</reference>
<proteinExistence type="inferred from homology"/>
<protein>
    <recommendedName>
        <fullName evidence="1">33 kDa chaperonin</fullName>
    </recommendedName>
    <alternativeName>
        <fullName evidence="1">Heat shock protein 33 homolog</fullName>
        <shortName evidence="1">HSP33</shortName>
    </alternativeName>
</protein>
<name>HSLO_PSEU2</name>
<dbReference type="EMBL" id="CP000075">
    <property type="protein sequence ID" value="AAY35242.1"/>
    <property type="molecule type" value="Genomic_DNA"/>
</dbReference>
<dbReference type="RefSeq" id="WP_003408317.1">
    <property type="nucleotide sequence ID" value="NC_007005.1"/>
</dbReference>
<dbReference type="RefSeq" id="YP_233280.1">
    <property type="nucleotide sequence ID" value="NC_007005.1"/>
</dbReference>
<dbReference type="SMR" id="Q500D0"/>
<dbReference type="STRING" id="205918.Psyr_0169"/>
<dbReference type="KEGG" id="psb:Psyr_0169"/>
<dbReference type="PATRIC" id="fig|205918.7.peg.165"/>
<dbReference type="eggNOG" id="COG1281">
    <property type="taxonomic scope" value="Bacteria"/>
</dbReference>
<dbReference type="HOGENOM" id="CLU_054493_0_0_6"/>
<dbReference type="OrthoDB" id="9793753at2"/>
<dbReference type="Proteomes" id="UP000000426">
    <property type="component" value="Chromosome"/>
</dbReference>
<dbReference type="GO" id="GO:0005737">
    <property type="term" value="C:cytoplasm"/>
    <property type="evidence" value="ECO:0007669"/>
    <property type="project" value="UniProtKB-SubCell"/>
</dbReference>
<dbReference type="GO" id="GO:0044183">
    <property type="term" value="F:protein folding chaperone"/>
    <property type="evidence" value="ECO:0007669"/>
    <property type="project" value="TreeGrafter"/>
</dbReference>
<dbReference type="GO" id="GO:0051082">
    <property type="term" value="F:unfolded protein binding"/>
    <property type="evidence" value="ECO:0007669"/>
    <property type="project" value="UniProtKB-UniRule"/>
</dbReference>
<dbReference type="GO" id="GO:0042026">
    <property type="term" value="P:protein refolding"/>
    <property type="evidence" value="ECO:0007669"/>
    <property type="project" value="TreeGrafter"/>
</dbReference>
<dbReference type="CDD" id="cd00498">
    <property type="entry name" value="Hsp33"/>
    <property type="match status" value="1"/>
</dbReference>
<dbReference type="Gene3D" id="1.10.287.480">
    <property type="entry name" value="helix hairpin bin"/>
    <property type="match status" value="1"/>
</dbReference>
<dbReference type="Gene3D" id="3.55.30.10">
    <property type="entry name" value="Hsp33 domain"/>
    <property type="match status" value="1"/>
</dbReference>
<dbReference type="Gene3D" id="3.90.1280.10">
    <property type="entry name" value="HSP33 redox switch-like"/>
    <property type="match status" value="1"/>
</dbReference>
<dbReference type="HAMAP" id="MF_00117">
    <property type="entry name" value="HslO"/>
    <property type="match status" value="1"/>
</dbReference>
<dbReference type="InterPro" id="IPR000397">
    <property type="entry name" value="Heat_shock_Hsp33"/>
</dbReference>
<dbReference type="InterPro" id="IPR016154">
    <property type="entry name" value="Heat_shock_Hsp33_C"/>
</dbReference>
<dbReference type="InterPro" id="IPR016153">
    <property type="entry name" value="Heat_shock_Hsp33_N"/>
</dbReference>
<dbReference type="InterPro" id="IPR023212">
    <property type="entry name" value="Hsp33_helix_hairpin_bin_dom_sf"/>
</dbReference>
<dbReference type="NCBIfam" id="NF001033">
    <property type="entry name" value="PRK00114.1"/>
    <property type="match status" value="1"/>
</dbReference>
<dbReference type="PANTHER" id="PTHR30111">
    <property type="entry name" value="33 KDA CHAPERONIN"/>
    <property type="match status" value="1"/>
</dbReference>
<dbReference type="PANTHER" id="PTHR30111:SF1">
    <property type="entry name" value="33 KDA CHAPERONIN"/>
    <property type="match status" value="1"/>
</dbReference>
<dbReference type="Pfam" id="PF01430">
    <property type="entry name" value="HSP33"/>
    <property type="match status" value="1"/>
</dbReference>
<dbReference type="PIRSF" id="PIRSF005261">
    <property type="entry name" value="Heat_shock_Hsp33"/>
    <property type="match status" value="1"/>
</dbReference>
<dbReference type="SUPFAM" id="SSF64397">
    <property type="entry name" value="Hsp33 domain"/>
    <property type="match status" value="1"/>
</dbReference>
<dbReference type="SUPFAM" id="SSF118352">
    <property type="entry name" value="HSP33 redox switch-like"/>
    <property type="match status" value="1"/>
</dbReference>
<accession>Q500D0</accession>
<comment type="function">
    <text evidence="1">Redox regulated molecular chaperone. Protects both thermally unfolding and oxidatively damaged proteins from irreversible aggregation. Plays an important role in the bacterial defense system toward oxidative stress.</text>
</comment>
<comment type="subcellular location">
    <subcellularLocation>
        <location evidence="1">Cytoplasm</location>
    </subcellularLocation>
</comment>
<comment type="PTM">
    <text evidence="1">Under oxidizing conditions two disulfide bonds are formed involving the reactive cysteines. Under reducing conditions zinc is bound to the reactive cysteines and the protein is inactive.</text>
</comment>
<comment type="similarity">
    <text evidence="1">Belongs to the HSP33 family.</text>
</comment>
<sequence length="300" mass="33220">MHDFPNIDFTQRFIFDESDVRGELVALERSYAEVLAKHPYPEPVAQLLGELMAAAALLVGTLKFDGLLILQARSSGAVPLLMVECSSERELRGIARYDEALVTAGAGLQDLMPDGSLALTIDPNKGKRYQGIVALDGVDLSESLSNYFVMSEQLGTRFWLKADGHRARGLLLQQLPIAQITDPEERDASWEHVITLANTLTAEEMLGLDNQTILHRLYHEDPVRLFDEQPICFRCSCSRERSANALASLGLEDAQQLVIEHNGTIEIDCQFCNQRYLFDATDVAQLFAGGGVDSPSDTRH</sequence>
<gene>
    <name evidence="1" type="primary">hslO</name>
    <name type="ordered locus">Psyr_0169</name>
</gene>